<evidence type="ECO:0000255" key="1">
    <source>
        <dbReference type="HAMAP-Rule" id="MF_02011"/>
    </source>
</evidence>
<sequence>MTSEQFEYHLTGKEILEKEFKTGLRGYSPEDVDEFLDMVIKDYSTFTQEIEALQAENIRLVQELDNAPLRTSTQPAPTFQAAAQPAGTTNFDILKRLSNLEKHVFGNKLDDNE</sequence>
<reference key="1">
    <citation type="journal article" date="2004" name="Nucleic Acids Res.">
        <title>Whole genome comparisons of serotype 4b and 1/2a strains of the food-borne pathogen Listeria monocytogenes reveal new insights into the core genome components of this species.</title>
        <authorList>
            <person name="Nelson K.E."/>
            <person name="Fouts D.E."/>
            <person name="Mongodin E.F."/>
            <person name="Ravel J."/>
            <person name="DeBoy R.T."/>
            <person name="Kolonay J.F."/>
            <person name="Rasko D.A."/>
            <person name="Angiuoli S.V."/>
            <person name="Gill S.R."/>
            <person name="Paulsen I.T."/>
            <person name="Peterson J.D."/>
            <person name="White O."/>
            <person name="Nelson W.C."/>
            <person name="Nierman W.C."/>
            <person name="Beanan M.J."/>
            <person name="Brinkac L.M."/>
            <person name="Daugherty S.C."/>
            <person name="Dodson R.J."/>
            <person name="Durkin A.S."/>
            <person name="Madupu R."/>
            <person name="Haft D.H."/>
            <person name="Selengut J."/>
            <person name="Van Aken S.E."/>
            <person name="Khouri H.M."/>
            <person name="Fedorova N."/>
            <person name="Forberger H.A."/>
            <person name="Tran B."/>
            <person name="Kathariou S."/>
            <person name="Wonderling L.D."/>
            <person name="Uhlich G.A."/>
            <person name="Bayles D.O."/>
            <person name="Luchansky J.B."/>
            <person name="Fraser C.M."/>
        </authorList>
    </citation>
    <scope>NUCLEOTIDE SEQUENCE [LARGE SCALE GENOMIC DNA]</scope>
    <source>
        <strain>F2365</strain>
    </source>
</reference>
<name>GPSB_LISMF</name>
<accession>Q71YC7</accession>
<organism>
    <name type="scientific">Listeria monocytogenes serotype 4b (strain F2365)</name>
    <dbReference type="NCBI Taxonomy" id="265669"/>
    <lineage>
        <taxon>Bacteria</taxon>
        <taxon>Bacillati</taxon>
        <taxon>Bacillota</taxon>
        <taxon>Bacilli</taxon>
        <taxon>Bacillales</taxon>
        <taxon>Listeriaceae</taxon>
        <taxon>Listeria</taxon>
    </lineage>
</organism>
<keyword id="KW-0131">Cell cycle</keyword>
<keyword id="KW-0132">Cell division</keyword>
<keyword id="KW-0133">Cell shape</keyword>
<keyword id="KW-0175">Coiled coil</keyword>
<keyword id="KW-0963">Cytoplasm</keyword>
<gene>
    <name evidence="1" type="primary">gpsB</name>
    <name type="ordered locus">LMOf2365_1917</name>
</gene>
<feature type="chain" id="PRO_0000337927" description="Cell cycle protein GpsB">
    <location>
        <begin position="1"/>
        <end position="113"/>
    </location>
</feature>
<feature type="coiled-coil region" evidence="1">
    <location>
        <begin position="36"/>
        <end position="68"/>
    </location>
</feature>
<dbReference type="EMBL" id="AE017262">
    <property type="protein sequence ID" value="AAT04687.1"/>
    <property type="molecule type" value="Genomic_DNA"/>
</dbReference>
<dbReference type="RefSeq" id="WP_003722998.1">
    <property type="nucleotide sequence ID" value="NC_002973.6"/>
</dbReference>
<dbReference type="SMR" id="Q71YC7"/>
<dbReference type="KEGG" id="lmf:LMOf2365_1917"/>
<dbReference type="HOGENOM" id="CLU_140309_1_0_9"/>
<dbReference type="GO" id="GO:0005737">
    <property type="term" value="C:cytoplasm"/>
    <property type="evidence" value="ECO:0007669"/>
    <property type="project" value="UniProtKB-SubCell"/>
</dbReference>
<dbReference type="GO" id="GO:0051301">
    <property type="term" value="P:cell division"/>
    <property type="evidence" value="ECO:0007669"/>
    <property type="project" value="UniProtKB-UniRule"/>
</dbReference>
<dbReference type="GO" id="GO:0008360">
    <property type="term" value="P:regulation of cell shape"/>
    <property type="evidence" value="ECO:0007669"/>
    <property type="project" value="UniProtKB-UniRule"/>
</dbReference>
<dbReference type="Gene3D" id="6.10.250.660">
    <property type="match status" value="1"/>
</dbReference>
<dbReference type="HAMAP" id="MF_02011">
    <property type="entry name" value="GpsB"/>
    <property type="match status" value="1"/>
</dbReference>
<dbReference type="InterPro" id="IPR011229">
    <property type="entry name" value="Cell_cycle_GpsB"/>
</dbReference>
<dbReference type="InterPro" id="IPR019933">
    <property type="entry name" value="DivIVA_domain"/>
</dbReference>
<dbReference type="InterPro" id="IPR007793">
    <property type="entry name" value="DivIVA_fam"/>
</dbReference>
<dbReference type="NCBIfam" id="TIGR03544">
    <property type="entry name" value="DivI1A_domain"/>
    <property type="match status" value="1"/>
</dbReference>
<dbReference type="NCBIfam" id="NF010725">
    <property type="entry name" value="PRK14127.1"/>
    <property type="match status" value="1"/>
</dbReference>
<dbReference type="PANTHER" id="PTHR35794:SF1">
    <property type="entry name" value="CELL CYCLE PROTEIN GPSB"/>
    <property type="match status" value="1"/>
</dbReference>
<dbReference type="PANTHER" id="PTHR35794">
    <property type="entry name" value="CELL DIVISION PROTEIN DIVIVA"/>
    <property type="match status" value="1"/>
</dbReference>
<dbReference type="Pfam" id="PF05103">
    <property type="entry name" value="DivIVA"/>
    <property type="match status" value="1"/>
</dbReference>
<dbReference type="PIRSF" id="PIRSF029938">
    <property type="entry name" value="UCP029938"/>
    <property type="match status" value="1"/>
</dbReference>
<comment type="function">
    <text evidence="1">Divisome component that associates with the complex late in its assembly, after the Z-ring is formed, and is dependent on DivIC and PBP2B for its recruitment to the divisome. Together with EzrA, is a key component of the system that regulates PBP1 localization during cell cycle progression. Its main role could be the removal of PBP1 from the cell pole after pole maturation is completed. Also contributes to the recruitment of PBP1 to the division complex. Not essential for septum formation.</text>
</comment>
<comment type="subunit">
    <text evidence="1">Forms polymers through the coiled coil domains. Interacts with PBP1, MreC and EzrA.</text>
</comment>
<comment type="subcellular location">
    <subcellularLocation>
        <location evidence="1">Cytoplasm</location>
    </subcellularLocation>
    <text evidence="1">Shuttles between the lateral wall and the division site in a cell cycle-dependent manner.</text>
</comment>
<comment type="similarity">
    <text evidence="1">Belongs to the GpsB family.</text>
</comment>
<protein>
    <recommendedName>
        <fullName evidence="1">Cell cycle protein GpsB</fullName>
    </recommendedName>
    <alternativeName>
        <fullName evidence="1">Guiding PBP1-shuttling protein</fullName>
    </alternativeName>
</protein>
<proteinExistence type="inferred from homology"/>